<organism>
    <name type="scientific">Salmonella enteritidis PT4 (strain P125109)</name>
    <dbReference type="NCBI Taxonomy" id="550537"/>
    <lineage>
        <taxon>Bacteria</taxon>
        <taxon>Pseudomonadati</taxon>
        <taxon>Pseudomonadota</taxon>
        <taxon>Gammaproteobacteria</taxon>
        <taxon>Enterobacterales</taxon>
        <taxon>Enterobacteriaceae</taxon>
        <taxon>Salmonella</taxon>
    </lineage>
</organism>
<keyword id="KW-0963">Cytoplasm</keyword>
<keyword id="KW-0413">Isomerase</keyword>
<keyword id="KW-0464">Manganese</keyword>
<keyword id="KW-0479">Metal-binding</keyword>
<keyword id="KW-0684">Rhamnose metabolism</keyword>
<reference key="1">
    <citation type="journal article" date="2008" name="Genome Res.">
        <title>Comparative genome analysis of Salmonella enteritidis PT4 and Salmonella gallinarum 287/91 provides insights into evolutionary and host adaptation pathways.</title>
        <authorList>
            <person name="Thomson N.R."/>
            <person name="Clayton D.J."/>
            <person name="Windhorst D."/>
            <person name="Vernikos G."/>
            <person name="Davidson S."/>
            <person name="Churcher C."/>
            <person name="Quail M.A."/>
            <person name="Stevens M."/>
            <person name="Jones M.A."/>
            <person name="Watson M."/>
            <person name="Barron A."/>
            <person name="Layton A."/>
            <person name="Pickard D."/>
            <person name="Kingsley R.A."/>
            <person name="Bignell A."/>
            <person name="Clark L."/>
            <person name="Harris B."/>
            <person name="Ormond D."/>
            <person name="Abdellah Z."/>
            <person name="Brooks K."/>
            <person name="Cherevach I."/>
            <person name="Chillingworth T."/>
            <person name="Woodward J."/>
            <person name="Norberczak H."/>
            <person name="Lord A."/>
            <person name="Arrowsmith C."/>
            <person name="Jagels K."/>
            <person name="Moule S."/>
            <person name="Mungall K."/>
            <person name="Saunders M."/>
            <person name="Whitehead S."/>
            <person name="Chabalgoity J.A."/>
            <person name="Maskell D."/>
            <person name="Humphreys T."/>
            <person name="Roberts M."/>
            <person name="Barrow P.A."/>
            <person name="Dougan G."/>
            <person name="Parkhill J."/>
        </authorList>
    </citation>
    <scope>NUCLEOTIDE SEQUENCE [LARGE SCALE GENOMIC DNA]</scope>
    <source>
        <strain>P125109</strain>
    </source>
</reference>
<gene>
    <name evidence="1" type="primary">rhaA</name>
    <name type="ordered locus">SEN3837</name>
</gene>
<sequence>MTTQLEQAWELAKQRFAAVGIDVEEALRQLDRLPVSMHCWQGDDVAGFENPEGSLTGGIQSTGNYPGKARNATELRADLEQALRLIPGPKRLNLHAIYLESDTPVARDQIKPEHFKNWVEWAKANRLGLDFNPTCFSHPLSADGFTLSHPDAKIRQFWIDHCKASRRVSAYFGEQLGTPSVMNIWIPDGMKDITVDRLAPRQRLLEALDEVISEKFDPAHHIDAVESKLFGIGAESYTVGSNEFYMGYATSRQTALCLDAGHFHPTEVISDKISAAMLYVPRLLLHVSRPVRWDSDHVVLLDDETQAIASEIVRHNLFDRVHIGLDFFDASINRVAAWVIGTRNMKKALLRALLEPTDQLRQLEASGDYTVRLALLEEQKSLPWQAVWEMYCQRHDTPTGSQWLDSVRTYEKEILSKRS</sequence>
<comment type="function">
    <text evidence="1">Catalyzes the interconversion of L-rhamnose and L-rhamnulose.</text>
</comment>
<comment type="catalytic activity">
    <reaction evidence="1">
        <text>L-rhamnopyranose = L-rhamnulose</text>
        <dbReference type="Rhea" id="RHEA:23160"/>
        <dbReference type="ChEBI" id="CHEBI:17897"/>
        <dbReference type="ChEBI" id="CHEBI:62346"/>
        <dbReference type="EC" id="5.3.1.14"/>
    </reaction>
</comment>
<comment type="cofactor">
    <cofactor evidence="1">
        <name>Mn(2+)</name>
        <dbReference type="ChEBI" id="CHEBI:29035"/>
    </cofactor>
    <text evidence="1">Binds 1 Mn(2+) ion per subunit.</text>
</comment>
<comment type="pathway">
    <text evidence="1">Carbohydrate degradation; L-rhamnose degradation; glycerone phosphate from L-rhamnose: step 1/3.</text>
</comment>
<comment type="subunit">
    <text evidence="1">Homotetramer.</text>
</comment>
<comment type="subcellular location">
    <subcellularLocation>
        <location evidence="1">Cytoplasm</location>
    </subcellularLocation>
</comment>
<comment type="similarity">
    <text evidence="1">Belongs to the rhamnose isomerase family.</text>
</comment>
<dbReference type="EC" id="5.3.1.14" evidence="1"/>
<dbReference type="EMBL" id="AM933172">
    <property type="protein sequence ID" value="CAR35410.1"/>
    <property type="molecule type" value="Genomic_DNA"/>
</dbReference>
<dbReference type="RefSeq" id="WP_000211478.1">
    <property type="nucleotide sequence ID" value="NC_011294.1"/>
</dbReference>
<dbReference type="SMR" id="B5QWY2"/>
<dbReference type="KEGG" id="set:SEN3837"/>
<dbReference type="HOGENOM" id="CLU_052790_0_0_6"/>
<dbReference type="UniPathway" id="UPA00541">
    <property type="reaction ID" value="UER00601"/>
</dbReference>
<dbReference type="Proteomes" id="UP000000613">
    <property type="component" value="Chromosome"/>
</dbReference>
<dbReference type="GO" id="GO:0005737">
    <property type="term" value="C:cytoplasm"/>
    <property type="evidence" value="ECO:0007669"/>
    <property type="project" value="UniProtKB-SubCell"/>
</dbReference>
<dbReference type="GO" id="GO:0008740">
    <property type="term" value="F:L-rhamnose isomerase activity"/>
    <property type="evidence" value="ECO:0007669"/>
    <property type="project" value="UniProtKB-UniRule"/>
</dbReference>
<dbReference type="GO" id="GO:0030145">
    <property type="term" value="F:manganese ion binding"/>
    <property type="evidence" value="ECO:0007669"/>
    <property type="project" value="UniProtKB-UniRule"/>
</dbReference>
<dbReference type="GO" id="GO:0019324">
    <property type="term" value="P:L-lyxose metabolic process"/>
    <property type="evidence" value="ECO:0007669"/>
    <property type="project" value="TreeGrafter"/>
</dbReference>
<dbReference type="GO" id="GO:0019301">
    <property type="term" value="P:rhamnose catabolic process"/>
    <property type="evidence" value="ECO:0007669"/>
    <property type="project" value="UniProtKB-UniRule"/>
</dbReference>
<dbReference type="FunFam" id="3.20.20.150:FF:000006">
    <property type="entry name" value="L-rhamnose isomerase"/>
    <property type="match status" value="1"/>
</dbReference>
<dbReference type="Gene3D" id="3.20.20.150">
    <property type="entry name" value="Divalent-metal-dependent TIM barrel enzymes"/>
    <property type="match status" value="1"/>
</dbReference>
<dbReference type="HAMAP" id="MF_00541">
    <property type="entry name" value="RhaA"/>
    <property type="match status" value="1"/>
</dbReference>
<dbReference type="InterPro" id="IPR050337">
    <property type="entry name" value="L-rhamnose_isomerase"/>
</dbReference>
<dbReference type="InterPro" id="IPR009308">
    <property type="entry name" value="Rhamnose_isomerase"/>
</dbReference>
<dbReference type="InterPro" id="IPR036237">
    <property type="entry name" value="Xyl_isomerase-like_sf"/>
</dbReference>
<dbReference type="NCBIfam" id="NF002203">
    <property type="entry name" value="PRK01076.1"/>
    <property type="match status" value="1"/>
</dbReference>
<dbReference type="NCBIfam" id="TIGR01748">
    <property type="entry name" value="rhaA"/>
    <property type="match status" value="1"/>
</dbReference>
<dbReference type="PANTHER" id="PTHR30268">
    <property type="entry name" value="L-RHAMNOSE ISOMERASE"/>
    <property type="match status" value="1"/>
</dbReference>
<dbReference type="PANTHER" id="PTHR30268:SF0">
    <property type="entry name" value="L-RHAMNOSE ISOMERASE"/>
    <property type="match status" value="1"/>
</dbReference>
<dbReference type="Pfam" id="PF06134">
    <property type="entry name" value="RhaA"/>
    <property type="match status" value="1"/>
</dbReference>
<dbReference type="SUPFAM" id="SSF51658">
    <property type="entry name" value="Xylose isomerase-like"/>
    <property type="match status" value="1"/>
</dbReference>
<accession>B5QWY2</accession>
<protein>
    <recommendedName>
        <fullName evidence="1">L-rhamnose isomerase</fullName>
        <ecNumber evidence="1">5.3.1.14</ecNumber>
    </recommendedName>
</protein>
<proteinExistence type="inferred from homology"/>
<feature type="chain" id="PRO_1000128888" description="L-rhamnose isomerase">
    <location>
        <begin position="1"/>
        <end position="419"/>
    </location>
</feature>
<feature type="binding site" evidence="1">
    <location>
        <position position="262"/>
    </location>
    <ligand>
        <name>Mn(2+)</name>
        <dbReference type="ChEBI" id="CHEBI:29035"/>
    </ligand>
</feature>
<feature type="binding site" evidence="1">
    <location>
        <position position="294"/>
    </location>
    <ligand>
        <name>Mn(2+)</name>
        <dbReference type="ChEBI" id="CHEBI:29035"/>
    </ligand>
</feature>
<feature type="binding site" evidence="1">
    <location>
        <position position="296"/>
    </location>
    <ligand>
        <name>Mn(2+)</name>
        <dbReference type="ChEBI" id="CHEBI:29035"/>
    </ligand>
</feature>
<name>RHAA_SALEP</name>
<evidence type="ECO:0000255" key="1">
    <source>
        <dbReference type="HAMAP-Rule" id="MF_00541"/>
    </source>
</evidence>